<dbReference type="EC" id="2.8.1.-" evidence="1"/>
<dbReference type="EMBL" id="CP001144">
    <property type="protein sequence ID" value="ACH75418.1"/>
    <property type="molecule type" value="Genomic_DNA"/>
</dbReference>
<dbReference type="RefSeq" id="WP_001268011.1">
    <property type="nucleotide sequence ID" value="NC_011205.1"/>
</dbReference>
<dbReference type="SMR" id="B5FJM5"/>
<dbReference type="KEGG" id="sed:SeD_A3819"/>
<dbReference type="HOGENOM" id="CLU_132095_0_0_6"/>
<dbReference type="Proteomes" id="UP000008322">
    <property type="component" value="Chromosome"/>
</dbReference>
<dbReference type="GO" id="GO:1990228">
    <property type="term" value="C:sulfurtransferase complex"/>
    <property type="evidence" value="ECO:0007669"/>
    <property type="project" value="TreeGrafter"/>
</dbReference>
<dbReference type="GO" id="GO:0097163">
    <property type="term" value="F:sulfur carrier activity"/>
    <property type="evidence" value="ECO:0007669"/>
    <property type="project" value="TreeGrafter"/>
</dbReference>
<dbReference type="GO" id="GO:0016783">
    <property type="term" value="F:sulfurtransferase activity"/>
    <property type="evidence" value="ECO:0007669"/>
    <property type="project" value="UniProtKB-UniRule"/>
</dbReference>
<dbReference type="GO" id="GO:0002143">
    <property type="term" value="P:tRNA wobble position uridine thiolation"/>
    <property type="evidence" value="ECO:0007669"/>
    <property type="project" value="TreeGrafter"/>
</dbReference>
<dbReference type="FunFam" id="3.40.1260.10:FF:000001">
    <property type="entry name" value="Sulfurtransferase TusD"/>
    <property type="match status" value="1"/>
</dbReference>
<dbReference type="Gene3D" id="3.40.1260.10">
    <property type="entry name" value="DsrEFH-like"/>
    <property type="match status" value="1"/>
</dbReference>
<dbReference type="HAMAP" id="MF_00390">
    <property type="entry name" value="Thiourid_synth_D"/>
    <property type="match status" value="1"/>
</dbReference>
<dbReference type="InterPro" id="IPR027396">
    <property type="entry name" value="DsrEFH-like"/>
</dbReference>
<dbReference type="InterPro" id="IPR003787">
    <property type="entry name" value="Sulphur_relay_DsrE/F-like"/>
</dbReference>
<dbReference type="InterPro" id="IPR017463">
    <property type="entry name" value="Sulphur_relay_TusD/DsrE"/>
</dbReference>
<dbReference type="NCBIfam" id="NF001237">
    <property type="entry name" value="PRK00207.1"/>
    <property type="match status" value="1"/>
</dbReference>
<dbReference type="NCBIfam" id="TIGR03012">
    <property type="entry name" value="sulf_tusD_dsrE"/>
    <property type="match status" value="1"/>
</dbReference>
<dbReference type="PANTHER" id="PTHR34874">
    <property type="entry name" value="PROTEIN YCHN"/>
    <property type="match status" value="1"/>
</dbReference>
<dbReference type="PANTHER" id="PTHR34874:SF3">
    <property type="entry name" value="SULFURTRANSFERASE TUSD"/>
    <property type="match status" value="1"/>
</dbReference>
<dbReference type="Pfam" id="PF02635">
    <property type="entry name" value="DsrE"/>
    <property type="match status" value="1"/>
</dbReference>
<dbReference type="SUPFAM" id="SSF75169">
    <property type="entry name" value="DsrEFH-like"/>
    <property type="match status" value="1"/>
</dbReference>
<accession>B5FJM5</accession>
<keyword id="KW-0963">Cytoplasm</keyword>
<keyword id="KW-0808">Transferase</keyword>
<keyword id="KW-0819">tRNA processing</keyword>
<reference key="1">
    <citation type="journal article" date="2011" name="J. Bacteriol.">
        <title>Comparative genomics of 28 Salmonella enterica isolates: evidence for CRISPR-mediated adaptive sublineage evolution.</title>
        <authorList>
            <person name="Fricke W.F."/>
            <person name="Mammel M.K."/>
            <person name="McDermott P.F."/>
            <person name="Tartera C."/>
            <person name="White D.G."/>
            <person name="Leclerc J.E."/>
            <person name="Ravel J."/>
            <person name="Cebula T.A."/>
        </authorList>
    </citation>
    <scope>NUCLEOTIDE SEQUENCE [LARGE SCALE GENOMIC DNA]</scope>
    <source>
        <strain>CT_02021853</strain>
    </source>
</reference>
<feature type="chain" id="PRO_1000122868" description="Sulfurtransferase TusD">
    <location>
        <begin position="1"/>
        <end position="128"/>
    </location>
</feature>
<feature type="active site" description="Cysteine persulfide intermediate" evidence="1">
    <location>
        <position position="78"/>
    </location>
</feature>
<organism>
    <name type="scientific">Salmonella dublin (strain CT_02021853)</name>
    <dbReference type="NCBI Taxonomy" id="439851"/>
    <lineage>
        <taxon>Bacteria</taxon>
        <taxon>Pseudomonadati</taxon>
        <taxon>Pseudomonadota</taxon>
        <taxon>Gammaproteobacteria</taxon>
        <taxon>Enterobacterales</taxon>
        <taxon>Enterobacteriaceae</taxon>
        <taxon>Salmonella</taxon>
    </lineage>
</organism>
<gene>
    <name evidence="1" type="primary">tusD</name>
    <name type="ordered locus">SeD_A3819</name>
</gene>
<evidence type="ECO:0000255" key="1">
    <source>
        <dbReference type="HAMAP-Rule" id="MF_00390"/>
    </source>
</evidence>
<protein>
    <recommendedName>
        <fullName evidence="1">Sulfurtransferase TusD</fullName>
        <ecNumber evidence="1">2.8.1.-</ecNumber>
    </recommendedName>
    <alternativeName>
        <fullName evidence="1">tRNA 2-thiouridine synthesizing protein D</fullName>
    </alternativeName>
</protein>
<proteinExistence type="inferred from homology"/>
<comment type="function">
    <text evidence="1">Part of a sulfur-relay system required for 2-thiolation of 5-methylaminomethyl-2-thiouridine (mnm(5)s(2)U) at tRNA wobble positions. Accepts sulfur from TusA and transfers it in turn to TusE.</text>
</comment>
<comment type="subunit">
    <text evidence="1">Heterohexamer, formed by a dimer of trimers. The hexameric TusBCD complex contains 2 copies each of TusB, TusC and TusD. The TusBCD complex interacts with TusE.</text>
</comment>
<comment type="subcellular location">
    <subcellularLocation>
        <location evidence="1">Cytoplasm</location>
    </subcellularLocation>
</comment>
<comment type="similarity">
    <text evidence="1">Belongs to the DsrE/TusD family.</text>
</comment>
<name>TUSD_SALDC</name>
<sequence>MRYAIMVTGPAYGTQQASSALQFAHALLNEGHELASVFFYREGVYNANLLTSPASDEYDLVRAWQKLNTQHGVALNICVAAALRRGIIDETEAGRLELPSANLQPGFTLSGLGALAEASLTCDRVVQF</sequence>